<proteinExistence type="predicted"/>
<dbReference type="EMBL" id="AY653733">
    <property type="protein sequence ID" value="AAV50843.1"/>
    <property type="molecule type" value="Genomic_DNA"/>
</dbReference>
<dbReference type="SMR" id="Q5UR56"/>
<dbReference type="KEGG" id="vg:9925216"/>
<dbReference type="Proteomes" id="UP000001134">
    <property type="component" value="Genome"/>
</dbReference>
<dbReference type="Gene3D" id="1.25.40.20">
    <property type="entry name" value="Ankyrin repeat-containing domain"/>
    <property type="match status" value="1"/>
</dbReference>
<dbReference type="InterPro" id="IPR036770">
    <property type="entry name" value="Ankyrin_rpt-contain_sf"/>
</dbReference>
<dbReference type="SUPFAM" id="SSF48403">
    <property type="entry name" value="Ankyrin repeat"/>
    <property type="match status" value="1"/>
</dbReference>
<gene>
    <name type="ordered locus">MIMI_R580</name>
</gene>
<organismHost>
    <name type="scientific">Acanthamoeba polyphaga</name>
    <name type="common">Amoeba</name>
    <dbReference type="NCBI Taxonomy" id="5757"/>
</organismHost>
<protein>
    <recommendedName>
        <fullName>Putative ankyrin repeat protein R580</fullName>
    </recommendedName>
</protein>
<feature type="chain" id="PRO_0000244009" description="Putative ankyrin repeat protein R580">
    <location>
        <begin position="1"/>
        <end position="468"/>
    </location>
</feature>
<feature type="repeat" description="ANK 1">
    <location>
        <begin position="12"/>
        <end position="41"/>
    </location>
</feature>
<feature type="repeat" description="ANK 2">
    <location>
        <begin position="189"/>
        <end position="218"/>
    </location>
</feature>
<feature type="repeat" description="ANK 3">
    <location>
        <begin position="249"/>
        <end position="278"/>
    </location>
</feature>
<feature type="repeat" description="ANK 4">
    <location>
        <begin position="336"/>
        <end position="365"/>
    </location>
</feature>
<feature type="repeat" description="ANK 5">
    <location>
        <begin position="367"/>
        <end position="393"/>
    </location>
</feature>
<feature type="repeat" description="ANK 6">
    <location>
        <begin position="394"/>
        <end position="423"/>
    </location>
</feature>
<organism>
    <name type="scientific">Acanthamoeba polyphaga mimivirus</name>
    <name type="common">APMV</name>
    <dbReference type="NCBI Taxonomy" id="212035"/>
    <lineage>
        <taxon>Viruses</taxon>
        <taxon>Varidnaviria</taxon>
        <taxon>Bamfordvirae</taxon>
        <taxon>Nucleocytoviricota</taxon>
        <taxon>Megaviricetes</taxon>
        <taxon>Imitervirales</taxon>
        <taxon>Mimiviridae</taxon>
        <taxon>Megamimivirinae</taxon>
        <taxon>Mimivirus</taxon>
        <taxon>Mimivirus bradfordmassiliense</taxon>
    </lineage>
</organism>
<sequence>MSKTYYIISTNDYFDPINLSIKDGGEKTIDIIDCERYTLIDCIIFFCKKESFVIEIIVPDFLTKDKLLCDSENLSLCVVNNIYYMNDISVFDSMSLEKSTLKSLMNWAVKNNYKVLLQKYLDNQNIKIYDLLACGISNSNVCDNILELLLSYCKYFQENETMFLVSFCLEMHRIDIAKTLIMYNSYPSVINKSLNFASKSNMSELAIFLVDNGAEINCDHILCFIRIGDIDTVLYMLCRYDVQKLIDRCHFDLVEAVFNSGSLEMIETFIDFGMKINSKVYQHLKYDSKDTYEILRILLAREIYPRKCSDVLKNAAHICSIDVLKILVDFEFNQKSFDNALVSTINAGKFKNAEYLLFSGANINFNNMPTNCMFKINFQTIKFLIDNNFDLEIHGTLILNKSLLNGYYDCANILIENGVKFSLTKSELLKIYSDFQNTHHGQIDPELNINSLTSDELENLIYIDIVNK</sequence>
<name>YR580_MIMIV</name>
<keyword id="KW-0040">ANK repeat</keyword>
<keyword id="KW-1185">Reference proteome</keyword>
<keyword id="KW-0677">Repeat</keyword>
<reference key="1">
    <citation type="journal article" date="2004" name="Science">
        <title>The 1.2-megabase genome sequence of Mimivirus.</title>
        <authorList>
            <person name="Raoult D."/>
            <person name="Audic S."/>
            <person name="Robert C."/>
            <person name="Abergel C."/>
            <person name="Renesto P."/>
            <person name="Ogata H."/>
            <person name="La Scola B."/>
            <person name="Susan M."/>
            <person name="Claverie J.-M."/>
        </authorList>
    </citation>
    <scope>NUCLEOTIDE SEQUENCE [LARGE SCALE GENOMIC DNA]</scope>
    <source>
        <strain>Rowbotham-Bradford</strain>
    </source>
</reference>
<accession>Q5UR56</accession>